<gene>
    <name evidence="14 16" type="primary">SPPL2A</name>
    <name evidence="13" type="synonym">IMP3</name>
    <name type="synonym">PSL2</name>
    <name type="ORF">PSEC0147</name>
</gene>
<proteinExistence type="evidence at protein level"/>
<name>SPP2A_HUMAN</name>
<reference key="1">
    <citation type="submission" date="2001-09" db="EMBL/GenBank/DDBJ databases">
        <title>Characterization of a new protein family with homology to presenilins.</title>
        <authorList>
            <person name="Irmler M."/>
            <person name="Tomiuk S."/>
            <person name="Korner M.R."/>
            <person name="Hofmann K."/>
            <person name="Conradt M."/>
        </authorList>
    </citation>
    <scope>NUCLEOTIDE SEQUENCE [MRNA]</scope>
</reference>
<reference key="2">
    <citation type="journal article" date="2002" name="Biochemistry (Mosc.)">
        <title>Novel class of polytopic proteins with domains associated with putative protease activity.</title>
        <authorList>
            <person name="Grigorenko A.P."/>
            <person name="Moliaka Y.K."/>
            <person name="Korovaitseva G.I."/>
            <person name="Rogaev E.I."/>
        </authorList>
    </citation>
    <scope>NUCLEOTIDE SEQUENCE [MRNA]</scope>
    <source>
        <tissue>Blood</tissue>
    </source>
</reference>
<reference key="3">
    <citation type="journal article" date="2004" name="Nat. Genet.">
        <title>Complete sequencing and characterization of 21,243 full-length human cDNAs.</title>
        <authorList>
            <person name="Ota T."/>
            <person name="Suzuki Y."/>
            <person name="Nishikawa T."/>
            <person name="Otsuki T."/>
            <person name="Sugiyama T."/>
            <person name="Irie R."/>
            <person name="Wakamatsu A."/>
            <person name="Hayashi K."/>
            <person name="Sato H."/>
            <person name="Nagai K."/>
            <person name="Kimura K."/>
            <person name="Makita H."/>
            <person name="Sekine M."/>
            <person name="Obayashi M."/>
            <person name="Nishi T."/>
            <person name="Shibahara T."/>
            <person name="Tanaka T."/>
            <person name="Ishii S."/>
            <person name="Yamamoto J."/>
            <person name="Saito K."/>
            <person name="Kawai Y."/>
            <person name="Isono Y."/>
            <person name="Nakamura Y."/>
            <person name="Nagahari K."/>
            <person name="Murakami K."/>
            <person name="Yasuda T."/>
            <person name="Iwayanagi T."/>
            <person name="Wagatsuma M."/>
            <person name="Shiratori A."/>
            <person name="Sudo H."/>
            <person name="Hosoiri T."/>
            <person name="Kaku Y."/>
            <person name="Kodaira H."/>
            <person name="Kondo H."/>
            <person name="Sugawara M."/>
            <person name="Takahashi M."/>
            <person name="Kanda K."/>
            <person name="Yokoi T."/>
            <person name="Furuya T."/>
            <person name="Kikkawa E."/>
            <person name="Omura Y."/>
            <person name="Abe K."/>
            <person name="Kamihara K."/>
            <person name="Katsuta N."/>
            <person name="Sato K."/>
            <person name="Tanikawa M."/>
            <person name="Yamazaki M."/>
            <person name="Ninomiya K."/>
            <person name="Ishibashi T."/>
            <person name="Yamashita H."/>
            <person name="Murakawa K."/>
            <person name="Fujimori K."/>
            <person name="Tanai H."/>
            <person name="Kimata M."/>
            <person name="Watanabe M."/>
            <person name="Hiraoka S."/>
            <person name="Chiba Y."/>
            <person name="Ishida S."/>
            <person name="Ono Y."/>
            <person name="Takiguchi S."/>
            <person name="Watanabe S."/>
            <person name="Yosida M."/>
            <person name="Hotuta T."/>
            <person name="Kusano J."/>
            <person name="Kanehori K."/>
            <person name="Takahashi-Fujii A."/>
            <person name="Hara H."/>
            <person name="Tanase T.-O."/>
            <person name="Nomura Y."/>
            <person name="Togiya S."/>
            <person name="Komai F."/>
            <person name="Hara R."/>
            <person name="Takeuchi K."/>
            <person name="Arita M."/>
            <person name="Imose N."/>
            <person name="Musashino K."/>
            <person name="Yuuki H."/>
            <person name="Oshima A."/>
            <person name="Sasaki N."/>
            <person name="Aotsuka S."/>
            <person name="Yoshikawa Y."/>
            <person name="Matsunawa H."/>
            <person name="Ichihara T."/>
            <person name="Shiohata N."/>
            <person name="Sano S."/>
            <person name="Moriya S."/>
            <person name="Momiyama H."/>
            <person name="Satoh N."/>
            <person name="Takami S."/>
            <person name="Terashima Y."/>
            <person name="Suzuki O."/>
            <person name="Nakagawa S."/>
            <person name="Senoh A."/>
            <person name="Mizoguchi H."/>
            <person name="Goto Y."/>
            <person name="Shimizu F."/>
            <person name="Wakebe H."/>
            <person name="Hishigaki H."/>
            <person name="Watanabe T."/>
            <person name="Sugiyama A."/>
            <person name="Takemoto M."/>
            <person name="Kawakami B."/>
            <person name="Yamazaki M."/>
            <person name="Watanabe K."/>
            <person name="Kumagai A."/>
            <person name="Itakura S."/>
            <person name="Fukuzumi Y."/>
            <person name="Fujimori Y."/>
            <person name="Komiyama M."/>
            <person name="Tashiro H."/>
            <person name="Tanigami A."/>
            <person name="Fujiwara T."/>
            <person name="Ono T."/>
            <person name="Yamada K."/>
            <person name="Fujii Y."/>
            <person name="Ozaki K."/>
            <person name="Hirao M."/>
            <person name="Ohmori Y."/>
            <person name="Kawabata A."/>
            <person name="Hikiji T."/>
            <person name="Kobatake N."/>
            <person name="Inagaki H."/>
            <person name="Ikema Y."/>
            <person name="Okamoto S."/>
            <person name="Okitani R."/>
            <person name="Kawakami T."/>
            <person name="Noguchi S."/>
            <person name="Itoh T."/>
            <person name="Shigeta K."/>
            <person name="Senba T."/>
            <person name="Matsumura K."/>
            <person name="Nakajima Y."/>
            <person name="Mizuno T."/>
            <person name="Morinaga M."/>
            <person name="Sasaki M."/>
            <person name="Togashi T."/>
            <person name="Oyama M."/>
            <person name="Hata H."/>
            <person name="Watanabe M."/>
            <person name="Komatsu T."/>
            <person name="Mizushima-Sugano J."/>
            <person name="Satoh T."/>
            <person name="Shirai Y."/>
            <person name="Takahashi Y."/>
            <person name="Nakagawa K."/>
            <person name="Okumura K."/>
            <person name="Nagase T."/>
            <person name="Nomura N."/>
            <person name="Kikuchi H."/>
            <person name="Masuho Y."/>
            <person name="Yamashita R."/>
            <person name="Nakai K."/>
            <person name="Yada T."/>
            <person name="Nakamura Y."/>
            <person name="Ohara O."/>
            <person name="Isogai T."/>
            <person name="Sugano S."/>
        </authorList>
    </citation>
    <scope>NUCLEOTIDE SEQUENCE [LARGE SCALE MRNA]</scope>
    <source>
        <tissue>Synovium</tissue>
        <tissue>Teratocarcinoma</tissue>
    </source>
</reference>
<reference key="4">
    <citation type="journal article" date="2005" name="DNA Res.">
        <title>Signal sequence and keyword trap in silico for selection of full-length human cDNAs encoding secretion or membrane proteins from oligo-capped cDNA libraries.</title>
        <authorList>
            <person name="Otsuki T."/>
            <person name="Ota T."/>
            <person name="Nishikawa T."/>
            <person name="Hayashi K."/>
            <person name="Suzuki Y."/>
            <person name="Yamamoto J."/>
            <person name="Wakamatsu A."/>
            <person name="Kimura K."/>
            <person name="Sakamoto K."/>
            <person name="Hatano N."/>
            <person name="Kawai Y."/>
            <person name="Ishii S."/>
            <person name="Saito K."/>
            <person name="Kojima S."/>
            <person name="Sugiyama T."/>
            <person name="Ono T."/>
            <person name="Okano K."/>
            <person name="Yoshikawa Y."/>
            <person name="Aotsuka S."/>
            <person name="Sasaki N."/>
            <person name="Hattori A."/>
            <person name="Okumura K."/>
            <person name="Nagai K."/>
            <person name="Sugano S."/>
            <person name="Isogai T."/>
        </authorList>
    </citation>
    <scope>NUCLEOTIDE SEQUENCE [LARGE SCALE MRNA]</scope>
    <source>
        <tissue>Placenta</tissue>
    </source>
</reference>
<reference key="5">
    <citation type="submission" date="2005-07" db="EMBL/GenBank/DDBJ databases">
        <authorList>
            <person name="Mural R.J."/>
            <person name="Istrail S."/>
            <person name="Sutton G.G."/>
            <person name="Florea L."/>
            <person name="Halpern A.L."/>
            <person name="Mobarry C.M."/>
            <person name="Lippert R."/>
            <person name="Walenz B."/>
            <person name="Shatkay H."/>
            <person name="Dew I."/>
            <person name="Miller J.R."/>
            <person name="Flanigan M.J."/>
            <person name="Edwards N.J."/>
            <person name="Bolanos R."/>
            <person name="Fasulo D."/>
            <person name="Halldorsson B.V."/>
            <person name="Hannenhalli S."/>
            <person name="Turner R."/>
            <person name="Yooseph S."/>
            <person name="Lu F."/>
            <person name="Nusskern D.R."/>
            <person name="Shue B.C."/>
            <person name="Zheng X.H."/>
            <person name="Zhong F."/>
            <person name="Delcher A.L."/>
            <person name="Huson D.H."/>
            <person name="Kravitz S.A."/>
            <person name="Mouchard L."/>
            <person name="Reinert K."/>
            <person name="Remington K.A."/>
            <person name="Clark A.G."/>
            <person name="Waterman M.S."/>
            <person name="Eichler E.E."/>
            <person name="Adams M.D."/>
            <person name="Hunkapiller M.W."/>
            <person name="Myers E.W."/>
            <person name="Venter J.C."/>
        </authorList>
    </citation>
    <scope>NUCLEOTIDE SEQUENCE [LARGE SCALE GENOMIC DNA]</scope>
</reference>
<reference key="6">
    <citation type="journal article" date="2004" name="Genome Res.">
        <title>The status, quality, and expansion of the NIH full-length cDNA project: the Mammalian Gene Collection (MGC).</title>
        <authorList>
            <consortium name="The MGC Project Team"/>
        </authorList>
    </citation>
    <scope>NUCLEOTIDE SEQUENCE [LARGE SCALE MRNA]</scope>
    <source>
        <tissue>Pancreas</tissue>
    </source>
</reference>
<reference key="7">
    <citation type="journal article" date="2002" name="Science">
        <title>Identification of signal peptide peptidase, a presenilin-type aspartic protease.</title>
        <authorList>
            <person name="Weihofen A."/>
            <person name="Binns K."/>
            <person name="Lemberg M.K."/>
            <person name="Ashman K."/>
            <person name="Martoglio B."/>
        </authorList>
    </citation>
    <scope>NUCLEOTIDE SEQUENCE [MRNA] OF 91-520</scope>
    <source>
        <tissue>Cervix carcinoma</tissue>
    </source>
</reference>
<reference key="8">
    <citation type="journal article" date="2004" name="J. Biol. Chem.">
        <title>Consensus analysis of signal peptide peptidase and homologous human aspartic proteases reveals opposite topology of catalytic domains compared with presenilins.</title>
        <authorList>
            <person name="Friedmann E."/>
            <person name="Lemberg M.K."/>
            <person name="Weihofen A."/>
            <person name="Dev K.K."/>
            <person name="Dengler U."/>
            <person name="Rovelli G."/>
            <person name="Martoglio B."/>
        </authorList>
    </citation>
    <scope>GLYCOSYLATION</scope>
    <scope>TOPOLOGY</scope>
    <scope>SUBCELLULAR LOCATION</scope>
    <scope>TISSUE SPECIFICITY</scope>
</reference>
<reference key="9">
    <citation type="journal article" date="2006" name="Nat. Cell Biol.">
        <title>SPPL2a and SPPL2b promote intramembrane proteolysis of TNFalpha in activated dendritic cells to trigger IL-12 production.</title>
        <authorList>
            <person name="Friedmann E."/>
            <person name="Hauben E."/>
            <person name="Maylandt K."/>
            <person name="Schleeger S."/>
            <person name="Vreugde S."/>
            <person name="Lichtenthaler S.F."/>
            <person name="Kuhn P.H."/>
            <person name="Stauffer D."/>
            <person name="Rovelli G."/>
            <person name="Martoglio B."/>
        </authorList>
    </citation>
    <scope>FUNCTION IN CLEAVAGE OF TNF</scope>
    <scope>SUBCELLULAR LOCATION</scope>
    <scope>MUTAGENESIS OF ASP-412</scope>
</reference>
<reference key="10">
    <citation type="journal article" date="2006" name="Nat. Cell Biol.">
        <title>A gamma-secretase-like intramembrane cleavage of TNFalpha by the GxGD aspartyl protease SPPL2b.</title>
        <authorList>
            <person name="Fluhrer R."/>
            <person name="Grammer G."/>
            <person name="Israel L."/>
            <person name="Condron M.M."/>
            <person name="Haffner C."/>
            <person name="Friedmann E."/>
            <person name="Bohland C."/>
            <person name="Imhof A."/>
            <person name="Martoglio B."/>
            <person name="Teplow D.B."/>
            <person name="Haass C."/>
        </authorList>
    </citation>
    <scope>FUNCTION IN CLEAVAGE OF TNF</scope>
</reference>
<reference key="11">
    <citation type="journal article" date="2007" name="Cell Death Differ.">
        <title>The Fas ligand intracellular domain is released by ADAM10 and SPPL2a cleavage in T-cells.</title>
        <authorList>
            <person name="Kirkin V."/>
            <person name="Cahuzac N."/>
            <person name="Guardiola-Serrano F."/>
            <person name="Huault S."/>
            <person name="Luckerath K."/>
            <person name="Friedmann E."/>
            <person name="Novac N."/>
            <person name="Wels W.S."/>
            <person name="Martoglio B."/>
            <person name="Hueber A.O."/>
            <person name="Zornig M."/>
        </authorList>
    </citation>
    <scope>FUNCTION IN CLEAVAGE OF FASLG</scope>
    <scope>MUTAGENESIS OF ASP-412</scope>
</reference>
<reference key="12">
    <citation type="journal article" date="2008" name="J. Biol. Chem.">
        <title>Regulated intramembrane proteolysis of Bri2 (Itm2b) by ADAM10 and SPPL2a/SPPL2b.</title>
        <authorList>
            <person name="Martin L."/>
            <person name="Fluhrer R."/>
            <person name="Reiss K."/>
            <person name="Kremmer E."/>
            <person name="Saftig P."/>
            <person name="Haass C."/>
        </authorList>
    </citation>
    <scope>FUNCTION IN CLEAVAGE OF ITM2B</scope>
    <scope>INTERACTION WITH ITM2B</scope>
    <scope>MUTAGENESIS OF ASP-412</scope>
</reference>
<reference key="13">
    <citation type="journal article" date="2009" name="Mol. Cell. Proteomics">
        <title>A strategy for precise and large scale identification of core fucosylated glycoproteins.</title>
        <authorList>
            <person name="Jia W."/>
            <person name="Lu Z."/>
            <person name="Fu Y."/>
            <person name="Wang H.P."/>
            <person name="Wang L.H."/>
            <person name="Chi H."/>
            <person name="Yuan Z.F."/>
            <person name="Zheng Z.B."/>
            <person name="Song L.N."/>
            <person name="Han H.H."/>
            <person name="Liang Y.M."/>
            <person name="Wang J.L."/>
            <person name="Cai Y."/>
            <person name="Zhang Y.K."/>
            <person name="Deng Y.L."/>
            <person name="Ying W.T."/>
            <person name="He S.M."/>
            <person name="Qian X.H."/>
        </authorList>
    </citation>
    <scope>GLYCOSYLATION AT ASN-155</scope>
</reference>
<reference key="14">
    <citation type="journal article" date="2012" name="J. Biol. Chem.">
        <title>Foamy virus envelope protein is a substrate for signal peptide peptidase-like 3 (SPPL3).</title>
        <authorList>
            <person name="Voss M."/>
            <person name="Fukumori A."/>
            <person name="Kuhn P.H."/>
            <person name="Kunzel U."/>
            <person name="Klier B."/>
            <person name="Grammer G."/>
            <person name="Haug-Kroper M."/>
            <person name="Kremmer E."/>
            <person name="Lichtenthaler S.F."/>
            <person name="Steiner H."/>
            <person name="Schroder B."/>
            <person name="Haass C."/>
            <person name="Fluhrer R."/>
        </authorList>
    </citation>
    <scope>FUNCTION</scope>
    <scope>MUTAGENESIS OF ASP-412</scope>
</reference>
<reference key="15">
    <citation type="journal article" date="2018" name="Nat. Immunol.">
        <title>Disruption of an antimycobacterial circuit between dendritic and helper T cells in human SPPL2a deficiency.</title>
        <authorList>
            <person name="Kong X.F."/>
            <person name="Martinez-Barricarte R."/>
            <person name="Kennedy J."/>
            <person name="Mele F."/>
            <person name="Lazarov T."/>
            <person name="Deenick E.K."/>
            <person name="Ma C.S."/>
            <person name="Breton G."/>
            <person name="Lucero K.B."/>
            <person name="Langlais D."/>
            <person name="Bousfiha A."/>
            <person name="Aytekin C."/>
            <person name="Markle J."/>
            <person name="Trouillet C."/>
            <person name="Jabot-Hanin F."/>
            <person name="Arlehamn C.S.L."/>
            <person name="Rao G."/>
            <person name="Picard C."/>
            <person name="Lasseau T."/>
            <person name="Latorre D."/>
            <person name="Hambleton S."/>
            <person name="Deswarte C."/>
            <person name="Itan Y."/>
            <person name="Abarca K."/>
            <person name="Moraes-Vasconcelos D."/>
            <person name="Ailal F."/>
            <person name="Ikinciogullari A."/>
            <person name="Dogu F."/>
            <person name="Benhsaien I."/>
            <person name="Sette A."/>
            <person name="Abel L."/>
            <person name="Boisson-Dupuis S."/>
            <person name="Schroeder B."/>
            <person name="Nussenzweig M.C."/>
            <person name="Liu K."/>
            <person name="Geissmann F."/>
            <person name="Tangye S.G."/>
            <person name="Gros P."/>
            <person name="Sallusto F."/>
            <person name="Bustamante J."/>
            <person name="Casanova J.L."/>
        </authorList>
    </citation>
    <scope>INVOLVEMENT IN IMD86</scope>
</reference>
<organism>
    <name type="scientific">Homo sapiens</name>
    <name type="common">Human</name>
    <dbReference type="NCBI Taxonomy" id="9606"/>
    <lineage>
        <taxon>Eukaryota</taxon>
        <taxon>Metazoa</taxon>
        <taxon>Chordata</taxon>
        <taxon>Craniata</taxon>
        <taxon>Vertebrata</taxon>
        <taxon>Euteleostomi</taxon>
        <taxon>Mammalia</taxon>
        <taxon>Eutheria</taxon>
        <taxon>Euarchontoglires</taxon>
        <taxon>Primates</taxon>
        <taxon>Haplorrhini</taxon>
        <taxon>Catarrhini</taxon>
        <taxon>Hominidae</taxon>
        <taxon>Homo</taxon>
    </lineage>
</organism>
<keyword id="KW-0967">Endosome</keyword>
<keyword id="KW-0325">Glycoprotein</keyword>
<keyword id="KW-0378">Hydrolase</keyword>
<keyword id="KW-0458">Lysosome</keyword>
<keyword id="KW-0472">Membrane</keyword>
<keyword id="KW-0645">Protease</keyword>
<keyword id="KW-1267">Proteomics identification</keyword>
<keyword id="KW-1185">Reference proteome</keyword>
<keyword id="KW-0732">Signal</keyword>
<keyword id="KW-0812">Transmembrane</keyword>
<keyword id="KW-1133">Transmembrane helix</keyword>
<protein>
    <recommendedName>
        <fullName evidence="14 16">Signal peptide peptidase-like 2A</fullName>
        <shortName evidence="14">SPP-like 2A</shortName>
        <shortName evidence="14">SPPL2a</shortName>
        <ecNumber>3.4.23.-</ecNumber>
    </recommendedName>
    <alternativeName>
        <fullName evidence="13">Intramembrane protease 3</fullName>
        <shortName evidence="13">IMP-3</shortName>
    </alternativeName>
    <alternativeName>
        <fullName>Presenilin-like protein 2</fullName>
    </alternativeName>
</protein>
<accession>Q8TCT8</accession>
<accession>B2RDS0</accession>
<accession>Q8TAW1</accession>
<accession>Q96SZ8</accession>
<comment type="function">
    <text evidence="3 6 7 8 9 11">Intramembrane-cleaving aspartic protease (I-CLiP) that cleaves type II membrane signal peptides in the hydrophobic plane of the membrane. Functions in FASLG, ITM2B and TNF processing (PubMed:16829951, PubMed:16829952, PubMed:17557115, PubMed:17965014). Catalyzes the intramembrane cleavage of the anchored fragment of shed TNF-alpha (TNF), which promotes the release of the intracellular domain (ICD) for signaling to the nucleus (PubMed:16829952). Also responsible for the intramembrane cleavage of Fas antigen ligand FASLG, which promotes the release of the intracellular FasL domain (FasL ICD) (PubMed:17557115). Essential for degradation of the invariant chain CD74 that plays a central role in the function of antigen-presenting cells in the immune system (By similarity). Plays a role in the regulation of innate and adaptive immunity (PubMed:16829952). Catalyzes the intramembrane cleavage of the simian foamy virus envelope glycoprotein gp130 independently of prior ectodomain shedding by furin or furin-like proprotein convertase (PC)-mediated cleavage proteolysis (PubMed:23132852).</text>
</comment>
<comment type="subunit">
    <text evidence="9">Interacts with ITM2B (PubMed:17965014).</text>
</comment>
<comment type="interaction">
    <interactant intactId="EBI-750784">
        <id>Q8TCT8</id>
    </interactant>
    <interactant intactId="EBI-347996">
        <id>O43765</id>
        <label>SGTA</label>
    </interactant>
    <organismsDiffer>false</organismsDiffer>
    <experiments>7</experiments>
</comment>
<comment type="interaction">
    <interactant intactId="EBI-750784">
        <id>Q8TCT8</id>
    </interactant>
    <interactant intactId="EBI-720609">
        <id>O76024</id>
        <label>WFS1</label>
    </interactant>
    <organismsDiffer>false</organismsDiffer>
    <experiments>3</experiments>
</comment>
<comment type="subcellular location">
    <subcellularLocation>
        <location evidence="7">Late endosome membrane</location>
        <topology evidence="15">Multi-pass membrane protein</topology>
    </subcellularLocation>
    <subcellularLocation>
        <location evidence="3">Lysosome membrane</location>
        <topology evidence="3">Multi-pass membrane protein</topology>
    </subcellularLocation>
    <subcellularLocation>
        <location evidence="5">Membrane</location>
        <topology evidence="15">Multi-pass membrane protein</topology>
        <orientation evidence="5">Lumenal side</orientation>
    </subcellularLocation>
    <text>Colocalizes with palmitoylated and myristoylated proteins at the plasma membrane.</text>
</comment>
<comment type="tissue specificity">
    <text evidence="5">Ubiquitous.</text>
</comment>
<comment type="domain">
    <text evidence="1 3">The PAL motif is required for normal active site conformation. The catalytic domains embedded in the membrane are in the opposite orientation to that of the presenilin protein family; therefore, it is predicted to cleave type II-oriented substrate peptides like the prototypic protease SPP. The C-terminal tail is necessary for lysosomal transport.</text>
</comment>
<comment type="PTM">
    <text evidence="5 10">Glycosylated.</text>
</comment>
<comment type="disease" evidence="12">
    <disease id="DI-06255">
        <name>Immunodeficiency 86</name>
        <acronym>IMD86</acronym>
        <description>An autosomal recessive disorder characterized by susceptibility to mycobacterial disease after exposure to BCG vaccine. Affected individuals usually develop localized mycobacterial lymphadenopathy.</description>
        <dbReference type="MIM" id="619549"/>
    </disease>
    <text>The disease is caused by variants affecting the gene represented in this entry.</text>
</comment>
<comment type="similarity">
    <text evidence="15">Belongs to the peptidase A22B family.</text>
</comment>
<comment type="sequence caution" evidence="15">
    <conflict type="erroneous initiation">
        <sequence resource="EMBL-CDS" id="BAB55117"/>
    </conflict>
    <text>Truncated N-terminus.</text>
</comment>
<comment type="sequence caution" evidence="15">
    <conflict type="erroneous initiation">
        <sequence resource="EMBL-CDS" id="CAD13133"/>
    </conflict>
    <text>Truncated N-terminus.</text>
</comment>
<evidence type="ECO:0000250" key="1">
    <source>
        <dbReference type="UniProtKB" id="P49768"/>
    </source>
</evidence>
<evidence type="ECO:0000250" key="2">
    <source>
        <dbReference type="UniProtKB" id="P49810"/>
    </source>
</evidence>
<evidence type="ECO:0000250" key="3">
    <source>
        <dbReference type="UniProtKB" id="Q9JJF9"/>
    </source>
</evidence>
<evidence type="ECO:0000255" key="4"/>
<evidence type="ECO:0000269" key="5">
    <source>
    </source>
</evidence>
<evidence type="ECO:0000269" key="6">
    <source>
    </source>
</evidence>
<evidence type="ECO:0000269" key="7">
    <source>
    </source>
</evidence>
<evidence type="ECO:0000269" key="8">
    <source>
    </source>
</evidence>
<evidence type="ECO:0000269" key="9">
    <source>
    </source>
</evidence>
<evidence type="ECO:0000269" key="10">
    <source>
    </source>
</evidence>
<evidence type="ECO:0000269" key="11">
    <source>
    </source>
</evidence>
<evidence type="ECO:0000269" key="12">
    <source>
    </source>
</evidence>
<evidence type="ECO:0000303" key="13">
    <source>
    </source>
</evidence>
<evidence type="ECO:0000303" key="14">
    <source>
    </source>
</evidence>
<evidence type="ECO:0000305" key="15"/>
<evidence type="ECO:0000312" key="16">
    <source>
        <dbReference type="HGNC" id="HGNC:30227"/>
    </source>
</evidence>
<sequence length="520" mass="58143">MGPQRRLSPAGAALLWGFLLQLTAAQEAILHASGNGTTKDYCMLYNPYWTALPSTLENATSISLMNLTSTPLCNLSDIPPVGIKSKAVVVPWGSCHFLEKARIAQKGGAEAMLVVNNSVLFPPSGNRSEFPDVKILIAFISYKDFRDMNQTLGDNITVKMYSPSWPNFDYTMVVIFVIAVFTVALGGYWSGLVELENLKAVTTEDREMRKKKEEYLTFSPLTVVIFVVICCVMMVLLYFFYKWLVYVMIAIFCIASAMSLYNCLAALIHKIPYGQCTIACRGKNMEVRLIFLSGLCIAVAVVWAVFRNEDRWAWILQDILGIAFCLNLIKTLKLPNFKSCVILLGLLLLYDVFFVFITPFITKNGESIMVELAAGPFGNNEKLPVVIRVPKLIYFSVMSVCLMPVSILGFGDIIVPGLLIAYCRRFDVQTGSSYIYYVSSTVAYAIGMILTFVVLVLMKKGQPALLYLVPCTLITASVVAWRRKEMKKFWKGNSYQMMDHLDCATNEENPVISGEQIVQQ</sequence>
<dbReference type="EC" id="3.4.23.-"/>
<dbReference type="EMBL" id="AJ345028">
    <property type="protein sequence ID" value="CAC87789.1"/>
    <property type="molecule type" value="mRNA"/>
</dbReference>
<dbReference type="EMBL" id="AY169314">
    <property type="protein sequence ID" value="AAO12539.1"/>
    <property type="molecule type" value="mRNA"/>
</dbReference>
<dbReference type="EMBL" id="AK027446">
    <property type="protein sequence ID" value="BAB55117.1"/>
    <property type="status" value="ALT_INIT"/>
    <property type="molecule type" value="mRNA"/>
</dbReference>
<dbReference type="EMBL" id="AK315651">
    <property type="protein sequence ID" value="BAG38017.1"/>
    <property type="molecule type" value="mRNA"/>
</dbReference>
<dbReference type="EMBL" id="AK075454">
    <property type="protein sequence ID" value="BAC11630.1"/>
    <property type="molecule type" value="mRNA"/>
</dbReference>
<dbReference type="EMBL" id="CH471082">
    <property type="protein sequence ID" value="EAW77410.1"/>
    <property type="molecule type" value="Genomic_DNA"/>
</dbReference>
<dbReference type="EMBL" id="BC025740">
    <property type="protein sequence ID" value="AAH25740.1"/>
    <property type="molecule type" value="mRNA"/>
</dbReference>
<dbReference type="EMBL" id="AJ420896">
    <property type="protein sequence ID" value="CAD13133.1"/>
    <property type="status" value="ALT_INIT"/>
    <property type="molecule type" value="mRNA"/>
</dbReference>
<dbReference type="CCDS" id="CCDS10138.1"/>
<dbReference type="RefSeq" id="NP_116191.2">
    <property type="nucleotide sequence ID" value="NM_032802.3"/>
</dbReference>
<dbReference type="RefSeq" id="XP_054234977.1">
    <property type="nucleotide sequence ID" value="XM_054379002.1"/>
</dbReference>
<dbReference type="BioGRID" id="124328">
    <property type="interactions" value="11"/>
</dbReference>
<dbReference type="FunCoup" id="Q8TCT8">
    <property type="interactions" value="581"/>
</dbReference>
<dbReference type="IntAct" id="Q8TCT8">
    <property type="interactions" value="7"/>
</dbReference>
<dbReference type="MINT" id="Q8TCT8"/>
<dbReference type="STRING" id="9606.ENSP00000261854"/>
<dbReference type="BindingDB" id="Q8TCT8"/>
<dbReference type="ChEMBL" id="CHEMBL4105833"/>
<dbReference type="MEROPS" id="A22.007"/>
<dbReference type="TCDB" id="1.A.54.3.2">
    <property type="family name" value="the presenilin er ca(2+) leak channel (presenilin) family"/>
</dbReference>
<dbReference type="GlyConnect" id="1746">
    <property type="glycosylation" value="4 N-Linked glycans (1 site)"/>
</dbReference>
<dbReference type="GlyCosmos" id="Q8TCT8">
    <property type="glycosylation" value="7 sites, 4 glycans"/>
</dbReference>
<dbReference type="GlyGen" id="Q8TCT8">
    <property type="glycosylation" value="8 sites, 16 N-linked glycans (4 sites), 1 O-linked glycan (1 site)"/>
</dbReference>
<dbReference type="iPTMnet" id="Q8TCT8"/>
<dbReference type="PhosphoSitePlus" id="Q8TCT8"/>
<dbReference type="SwissPalm" id="Q8TCT8"/>
<dbReference type="BioMuta" id="SPPL2A"/>
<dbReference type="DMDM" id="25008981"/>
<dbReference type="jPOST" id="Q8TCT8"/>
<dbReference type="MassIVE" id="Q8TCT8"/>
<dbReference type="PaxDb" id="9606-ENSP00000261854"/>
<dbReference type="PeptideAtlas" id="Q8TCT8"/>
<dbReference type="ProteomicsDB" id="74164"/>
<dbReference type="Pumba" id="Q8TCT8"/>
<dbReference type="Antibodypedia" id="24774">
    <property type="antibodies" value="118 antibodies from 24 providers"/>
</dbReference>
<dbReference type="DNASU" id="84888"/>
<dbReference type="Ensembl" id="ENST00000261854.10">
    <property type="protein sequence ID" value="ENSP00000261854.5"/>
    <property type="gene ID" value="ENSG00000138600.11"/>
</dbReference>
<dbReference type="GeneID" id="84888"/>
<dbReference type="KEGG" id="hsa:84888"/>
<dbReference type="MANE-Select" id="ENST00000261854.10">
    <property type="protein sequence ID" value="ENSP00000261854.5"/>
    <property type="RefSeq nucleotide sequence ID" value="NM_032802.4"/>
    <property type="RefSeq protein sequence ID" value="NP_116191.2"/>
</dbReference>
<dbReference type="UCSC" id="uc001zyv.4">
    <property type="organism name" value="human"/>
</dbReference>
<dbReference type="AGR" id="HGNC:30227"/>
<dbReference type="CTD" id="84888"/>
<dbReference type="DisGeNET" id="84888"/>
<dbReference type="GeneCards" id="SPPL2A"/>
<dbReference type="HGNC" id="HGNC:30227">
    <property type="gene designation" value="SPPL2A"/>
</dbReference>
<dbReference type="HPA" id="ENSG00000138600">
    <property type="expression patterns" value="Low tissue specificity"/>
</dbReference>
<dbReference type="MalaCards" id="SPPL2A"/>
<dbReference type="MIM" id="608238">
    <property type="type" value="gene"/>
</dbReference>
<dbReference type="MIM" id="619549">
    <property type="type" value="phenotype"/>
</dbReference>
<dbReference type="neXtProt" id="NX_Q8TCT8"/>
<dbReference type="NIAGADS" id="ENSG00000138600"/>
<dbReference type="OpenTargets" id="ENSG00000138600"/>
<dbReference type="VEuPathDB" id="HostDB:ENSG00000138600"/>
<dbReference type="eggNOG" id="KOG2442">
    <property type="taxonomic scope" value="Eukaryota"/>
</dbReference>
<dbReference type="GeneTree" id="ENSGT00940000157722"/>
<dbReference type="HOGENOM" id="CLU_023799_2_1_1"/>
<dbReference type="InParanoid" id="Q8TCT8"/>
<dbReference type="OMA" id="HDLWNYG"/>
<dbReference type="OrthoDB" id="29661at2759"/>
<dbReference type="PAN-GO" id="Q8TCT8">
    <property type="GO annotations" value="6 GO annotations based on evolutionary models"/>
</dbReference>
<dbReference type="PhylomeDB" id="Q8TCT8"/>
<dbReference type="TreeFam" id="TF319186"/>
<dbReference type="BRENDA" id="3.4.23.B24">
    <property type="organism ID" value="2681"/>
</dbReference>
<dbReference type="PathwayCommons" id="Q8TCT8"/>
<dbReference type="Reactome" id="R-HSA-5357905">
    <property type="pathway name" value="Regulation of TNFR1 signaling"/>
</dbReference>
<dbReference type="SignaLink" id="Q8TCT8"/>
<dbReference type="BioGRID-ORCS" id="84888">
    <property type="hits" value="11 hits in 1121 CRISPR screens"/>
</dbReference>
<dbReference type="ChiTaRS" id="SPPL2A">
    <property type="organism name" value="human"/>
</dbReference>
<dbReference type="GeneWiki" id="SPPL2A"/>
<dbReference type="GenomeRNAi" id="84888"/>
<dbReference type="Pharos" id="Q8TCT8">
    <property type="development level" value="Tchem"/>
</dbReference>
<dbReference type="PRO" id="PR:Q8TCT8"/>
<dbReference type="Proteomes" id="UP000005640">
    <property type="component" value="Chromosome 15"/>
</dbReference>
<dbReference type="RNAct" id="Q8TCT8">
    <property type="molecule type" value="protein"/>
</dbReference>
<dbReference type="Bgee" id="ENSG00000138600">
    <property type="expression patterns" value="Expressed in ileal mucosa and 190 other cell types or tissues"/>
</dbReference>
<dbReference type="ExpressionAtlas" id="Q8TCT8">
    <property type="expression patterns" value="baseline and differential"/>
</dbReference>
<dbReference type="GO" id="GO:0098554">
    <property type="term" value="C:cytoplasmic side of endoplasmic reticulum membrane"/>
    <property type="evidence" value="ECO:0000314"/>
    <property type="project" value="UniProtKB"/>
</dbReference>
<dbReference type="GO" id="GO:0070062">
    <property type="term" value="C:extracellular exosome"/>
    <property type="evidence" value="ECO:0007005"/>
    <property type="project" value="UniProtKB"/>
</dbReference>
<dbReference type="GO" id="GO:0030660">
    <property type="term" value="C:Golgi-associated vesicle membrane"/>
    <property type="evidence" value="ECO:0000314"/>
    <property type="project" value="UniProtKB"/>
</dbReference>
<dbReference type="GO" id="GO:0043231">
    <property type="term" value="C:intracellular membrane-bounded organelle"/>
    <property type="evidence" value="ECO:0000314"/>
    <property type="project" value="HPA"/>
</dbReference>
<dbReference type="GO" id="GO:0005770">
    <property type="term" value="C:late endosome"/>
    <property type="evidence" value="ECO:0000314"/>
    <property type="project" value="UniProtKB"/>
</dbReference>
<dbReference type="GO" id="GO:0031902">
    <property type="term" value="C:late endosome membrane"/>
    <property type="evidence" value="ECO:0007669"/>
    <property type="project" value="UniProtKB-SubCell"/>
</dbReference>
<dbReference type="GO" id="GO:0098553">
    <property type="term" value="C:lumenal side of endoplasmic reticulum membrane"/>
    <property type="evidence" value="ECO:0000314"/>
    <property type="project" value="UniProtKB"/>
</dbReference>
<dbReference type="GO" id="GO:0005765">
    <property type="term" value="C:lysosomal membrane"/>
    <property type="evidence" value="ECO:0007005"/>
    <property type="project" value="UniProtKB"/>
</dbReference>
<dbReference type="GO" id="GO:0016020">
    <property type="term" value="C:membrane"/>
    <property type="evidence" value="ECO:0000314"/>
    <property type="project" value="UniProtKB"/>
</dbReference>
<dbReference type="GO" id="GO:0005886">
    <property type="term" value="C:plasma membrane"/>
    <property type="evidence" value="ECO:0000314"/>
    <property type="project" value="HPA"/>
</dbReference>
<dbReference type="GO" id="GO:0042500">
    <property type="term" value="F:aspartic endopeptidase activity, intramembrane cleaving"/>
    <property type="evidence" value="ECO:0000314"/>
    <property type="project" value="UniProtKB"/>
</dbReference>
<dbReference type="GO" id="GO:0042803">
    <property type="term" value="F:protein homodimerization activity"/>
    <property type="evidence" value="ECO:0000314"/>
    <property type="project" value="UniProtKB"/>
</dbReference>
<dbReference type="GO" id="GO:0006509">
    <property type="term" value="P:membrane protein ectodomain proteolysis"/>
    <property type="evidence" value="ECO:0000314"/>
    <property type="project" value="UniProtKB"/>
</dbReference>
<dbReference type="GO" id="GO:0031293">
    <property type="term" value="P:membrane protein intracellular domain proteolysis"/>
    <property type="evidence" value="ECO:0000314"/>
    <property type="project" value="UniProtKB"/>
</dbReference>
<dbReference type="GO" id="GO:0033619">
    <property type="term" value="P:membrane protein proteolysis"/>
    <property type="evidence" value="ECO:0000314"/>
    <property type="project" value="UniProtKB"/>
</dbReference>
<dbReference type="GO" id="GO:0050776">
    <property type="term" value="P:regulation of immune response"/>
    <property type="evidence" value="ECO:0000315"/>
    <property type="project" value="UniProtKB"/>
</dbReference>
<dbReference type="GO" id="GO:0010803">
    <property type="term" value="P:regulation of tumor necrosis factor-mediated signaling pathway"/>
    <property type="evidence" value="ECO:0000304"/>
    <property type="project" value="Reactome"/>
</dbReference>
<dbReference type="CDD" id="cd02129">
    <property type="entry name" value="PA_hSPPL_like"/>
    <property type="match status" value="1"/>
</dbReference>
<dbReference type="FunFam" id="3.50.30.30:FF:000019">
    <property type="entry name" value="Signal peptide peptidase like 2A"/>
    <property type="match status" value="1"/>
</dbReference>
<dbReference type="Gene3D" id="3.50.30.30">
    <property type="match status" value="1"/>
</dbReference>
<dbReference type="InterPro" id="IPR046450">
    <property type="entry name" value="PA_dom_sf"/>
</dbReference>
<dbReference type="InterPro" id="IPR003137">
    <property type="entry name" value="PA_domain"/>
</dbReference>
<dbReference type="InterPro" id="IPR007369">
    <property type="entry name" value="Peptidase_A22B_SPP"/>
</dbReference>
<dbReference type="InterPro" id="IPR006639">
    <property type="entry name" value="Preselin/SPP"/>
</dbReference>
<dbReference type="PANTHER" id="PTHR12174">
    <property type="entry name" value="SIGNAL PEPTIDE PEPTIDASE"/>
    <property type="match status" value="1"/>
</dbReference>
<dbReference type="PANTHER" id="PTHR12174:SF34">
    <property type="entry name" value="SIGNAL PEPTIDE PEPTIDASE-LIKE 2A"/>
    <property type="match status" value="1"/>
</dbReference>
<dbReference type="Pfam" id="PF02225">
    <property type="entry name" value="PA"/>
    <property type="match status" value="1"/>
</dbReference>
<dbReference type="Pfam" id="PF04258">
    <property type="entry name" value="Peptidase_A22B"/>
    <property type="match status" value="1"/>
</dbReference>
<dbReference type="SMART" id="SM00730">
    <property type="entry name" value="PSN"/>
    <property type="match status" value="1"/>
</dbReference>
<dbReference type="SUPFAM" id="SSF52025">
    <property type="entry name" value="PA domain"/>
    <property type="match status" value="1"/>
</dbReference>
<feature type="signal peptide" evidence="5">
    <location>
        <begin position="1"/>
        <end position="25"/>
    </location>
</feature>
<feature type="chain" id="PRO_0000073910" description="Signal peptide peptidase-like 2A">
    <location>
        <begin position="26"/>
        <end position="520"/>
    </location>
</feature>
<feature type="topological domain" description="Lumenal" evidence="5">
    <location>
        <begin position="26"/>
        <end position="172"/>
    </location>
</feature>
<feature type="transmembrane region" description="Helical" evidence="4">
    <location>
        <begin position="173"/>
        <end position="193"/>
    </location>
</feature>
<feature type="topological domain" description="Cytoplasmic" evidence="4">
    <location>
        <begin position="194"/>
        <end position="220"/>
    </location>
</feature>
<feature type="transmembrane region" description="Helical" evidence="4">
    <location>
        <begin position="221"/>
        <end position="241"/>
    </location>
</feature>
<feature type="topological domain" description="Lumenal" evidence="4">
    <location>
        <begin position="242"/>
        <end position="247"/>
    </location>
</feature>
<feature type="transmembrane region" description="Helical" evidence="4">
    <location>
        <begin position="248"/>
        <end position="268"/>
    </location>
</feature>
<feature type="topological domain" description="Cytoplasmic" evidence="4">
    <location>
        <begin position="269"/>
        <end position="285"/>
    </location>
</feature>
<feature type="transmembrane region" description="Helical" evidence="4">
    <location>
        <begin position="286"/>
        <end position="306"/>
    </location>
</feature>
<feature type="topological domain" description="Lumenal" evidence="4">
    <location>
        <begin position="307"/>
        <end position="311"/>
    </location>
</feature>
<feature type="transmembrane region" description="Helical" evidence="4">
    <location>
        <begin position="312"/>
        <end position="332"/>
    </location>
</feature>
<feature type="topological domain" description="Cytoplasmic" evidence="4">
    <location>
        <begin position="333"/>
        <end position="340"/>
    </location>
</feature>
<feature type="transmembrane region" description="Helical" evidence="4">
    <location>
        <begin position="341"/>
        <end position="361"/>
    </location>
</feature>
<feature type="topological domain" description="Lumenal" evidence="5">
    <location>
        <begin position="362"/>
        <end position="399"/>
    </location>
</feature>
<feature type="transmembrane region" description="Helical" evidence="4">
    <location>
        <begin position="400"/>
        <end position="420"/>
    </location>
</feature>
<feature type="topological domain" description="Cytoplasmic" evidence="4">
    <location>
        <begin position="421"/>
        <end position="437"/>
    </location>
</feature>
<feature type="transmembrane region" description="Helical" evidence="4">
    <location>
        <begin position="438"/>
        <end position="458"/>
    </location>
</feature>
<feature type="topological domain" description="Lumenal" evidence="4">
    <location>
        <begin position="459"/>
        <end position="460"/>
    </location>
</feature>
<feature type="transmembrane region" description="Helical" evidence="4">
    <location>
        <begin position="461"/>
        <end position="481"/>
    </location>
</feature>
<feature type="topological domain" description="Cytoplasmic" evidence="5">
    <location>
        <begin position="482"/>
        <end position="520"/>
    </location>
</feature>
<feature type="domain" description="PA">
    <location>
        <begin position="63"/>
        <end position="151"/>
    </location>
</feature>
<feature type="short sequence motif" description="PAL">
    <location>
        <begin position="463"/>
        <end position="465"/>
    </location>
</feature>
<feature type="short sequence motif" description="YXXo lysosomal targeting motif">
    <location>
        <begin position="495"/>
        <end position="498"/>
    </location>
</feature>
<feature type="active site" evidence="2">
    <location>
        <position position="351"/>
    </location>
</feature>
<feature type="active site" evidence="2">
    <location>
        <position position="412"/>
    </location>
</feature>
<feature type="glycosylation site" description="N-linked (GlcNAc...) asparagine" evidence="4">
    <location>
        <position position="58"/>
    </location>
</feature>
<feature type="glycosylation site" description="N-linked (GlcNAc...) asparagine" evidence="4">
    <location>
        <position position="66"/>
    </location>
</feature>
<feature type="glycosylation site" description="N-linked (GlcNAc...) asparagine" evidence="4">
    <location>
        <position position="74"/>
    </location>
</feature>
<feature type="glycosylation site" description="N-linked (GlcNAc...) asparagine" evidence="4">
    <location>
        <position position="116"/>
    </location>
</feature>
<feature type="glycosylation site" description="N-linked (GlcNAc...) asparagine" evidence="4">
    <location>
        <position position="126"/>
    </location>
</feature>
<feature type="glycosylation site" description="N-linked (GlcNAc...) asparagine" evidence="4">
    <location>
        <position position="149"/>
    </location>
</feature>
<feature type="glycosylation site" description="N-linked (GlcNAc...) (complex) asparagine" evidence="10">
    <location>
        <position position="155"/>
    </location>
</feature>
<feature type="sequence variant" id="VAR_051790" description="In dbSNP:rs8034443.">
    <original>V</original>
    <variation>I</variation>
    <location>
        <position position="90"/>
    </location>
</feature>
<feature type="mutagenesis site" description="Loss of intramembrane-cleaving activity toward FASLG, ITM2B, TNF and the simian foamy virus envelope glycoprotein gp130." evidence="7 8 9 11">
    <original>D</original>
    <variation>A</variation>
    <location>
        <position position="412"/>
    </location>
</feature>
<feature type="sequence conflict" description="In Ref. 3; BAB55117." evidence="15" ref="3">
    <original>N</original>
    <variation>D</variation>
    <location>
        <position position="126"/>
    </location>
</feature>
<feature type="sequence conflict" description="In Ref. 4; BAC11630." evidence="15" ref="4">
    <original>I</original>
    <variation>T</variation>
    <location>
        <position position="271"/>
    </location>
</feature>
<feature type="sequence conflict" description="In Ref. 4; BAC11630." evidence="15" ref="4">
    <original>S</original>
    <variation>L</variation>
    <location>
        <position position="406"/>
    </location>
</feature>
<feature type="sequence conflict" description="In Ref. 4; BAC11630." evidence="15" ref="4">
    <original>I</original>
    <variation>F</variation>
    <location>
        <position position="446"/>
    </location>
</feature>
<feature type="sequence conflict" description="In Ref. 3; BAB55117." evidence="15" ref="3">
    <original>V</original>
    <variation>E</variation>
    <location>
        <position position="511"/>
    </location>
</feature>